<name>RS19_BIFA0</name>
<keyword id="KW-1185">Reference proteome</keyword>
<keyword id="KW-0687">Ribonucleoprotein</keyword>
<keyword id="KW-0689">Ribosomal protein</keyword>
<keyword id="KW-0694">RNA-binding</keyword>
<keyword id="KW-0699">rRNA-binding</keyword>
<sequence length="92" mass="10522">MTRSIKKGPFVDAHLQKKVDEQNAKGTHNVIKTWSRRSMITPDFIGHTFAVHDGRKHVPVFVTESMVGHKLGEFAPTRTFKGHVKDDKKSRR</sequence>
<protein>
    <recommendedName>
        <fullName evidence="1">Small ribosomal subunit protein uS19</fullName>
    </recommendedName>
    <alternativeName>
        <fullName evidence="2">30S ribosomal protein S19</fullName>
    </alternativeName>
</protein>
<accession>B8DW17</accession>
<reference key="1">
    <citation type="journal article" date="2009" name="J. Bacteriol.">
        <title>Genome sequence of the probiotic bacterium Bifidobacterium animalis subsp. lactis AD011.</title>
        <authorList>
            <person name="Kim J.F."/>
            <person name="Jeong H."/>
            <person name="Yu D.S."/>
            <person name="Choi S.-H."/>
            <person name="Hur C.-G."/>
            <person name="Park M.-S."/>
            <person name="Yoon S.H."/>
            <person name="Kim D.-W."/>
            <person name="Ji G.E."/>
            <person name="Park H.-S."/>
            <person name="Oh T.K."/>
        </authorList>
    </citation>
    <scope>NUCLEOTIDE SEQUENCE [LARGE SCALE GENOMIC DNA]</scope>
    <source>
        <strain>AD011</strain>
    </source>
</reference>
<gene>
    <name evidence="1" type="primary">rpsS</name>
    <name type="ordered locus">BLA_0366</name>
</gene>
<proteinExistence type="inferred from homology"/>
<organism>
    <name type="scientific">Bifidobacterium animalis subsp. lactis (strain AD011)</name>
    <dbReference type="NCBI Taxonomy" id="442563"/>
    <lineage>
        <taxon>Bacteria</taxon>
        <taxon>Bacillati</taxon>
        <taxon>Actinomycetota</taxon>
        <taxon>Actinomycetes</taxon>
        <taxon>Bifidobacteriales</taxon>
        <taxon>Bifidobacteriaceae</taxon>
        <taxon>Bifidobacterium</taxon>
    </lineage>
</organism>
<feature type="chain" id="PRO_1000146368" description="Small ribosomal subunit protein uS19">
    <location>
        <begin position="1"/>
        <end position="92"/>
    </location>
</feature>
<comment type="function">
    <text evidence="1">Protein S19 forms a complex with S13 that binds strongly to the 16S ribosomal RNA.</text>
</comment>
<comment type="similarity">
    <text evidence="1">Belongs to the universal ribosomal protein uS19 family.</text>
</comment>
<evidence type="ECO:0000255" key="1">
    <source>
        <dbReference type="HAMAP-Rule" id="MF_00531"/>
    </source>
</evidence>
<evidence type="ECO:0000305" key="2"/>
<dbReference type="EMBL" id="CP001213">
    <property type="protein sequence ID" value="ACL28668.1"/>
    <property type="molecule type" value="Genomic_DNA"/>
</dbReference>
<dbReference type="RefSeq" id="WP_004268580.1">
    <property type="nucleotide sequence ID" value="NC_011835.1"/>
</dbReference>
<dbReference type="SMR" id="B8DW17"/>
<dbReference type="STRING" id="442563.BLA_0366"/>
<dbReference type="GeneID" id="29696155"/>
<dbReference type="KEGG" id="bla:BLA_0366"/>
<dbReference type="HOGENOM" id="CLU_144911_0_1_11"/>
<dbReference type="Proteomes" id="UP000002456">
    <property type="component" value="Chromosome"/>
</dbReference>
<dbReference type="GO" id="GO:0005737">
    <property type="term" value="C:cytoplasm"/>
    <property type="evidence" value="ECO:0007669"/>
    <property type="project" value="UniProtKB-ARBA"/>
</dbReference>
<dbReference type="GO" id="GO:0015935">
    <property type="term" value="C:small ribosomal subunit"/>
    <property type="evidence" value="ECO:0007669"/>
    <property type="project" value="InterPro"/>
</dbReference>
<dbReference type="GO" id="GO:0019843">
    <property type="term" value="F:rRNA binding"/>
    <property type="evidence" value="ECO:0007669"/>
    <property type="project" value="UniProtKB-UniRule"/>
</dbReference>
<dbReference type="GO" id="GO:0003735">
    <property type="term" value="F:structural constituent of ribosome"/>
    <property type="evidence" value="ECO:0007669"/>
    <property type="project" value="InterPro"/>
</dbReference>
<dbReference type="GO" id="GO:0000028">
    <property type="term" value="P:ribosomal small subunit assembly"/>
    <property type="evidence" value="ECO:0007669"/>
    <property type="project" value="TreeGrafter"/>
</dbReference>
<dbReference type="GO" id="GO:0006412">
    <property type="term" value="P:translation"/>
    <property type="evidence" value="ECO:0007669"/>
    <property type="project" value="UniProtKB-UniRule"/>
</dbReference>
<dbReference type="FunFam" id="3.30.860.10:FF:000001">
    <property type="entry name" value="30S ribosomal protein S19"/>
    <property type="match status" value="1"/>
</dbReference>
<dbReference type="Gene3D" id="3.30.860.10">
    <property type="entry name" value="30s Ribosomal Protein S19, Chain A"/>
    <property type="match status" value="1"/>
</dbReference>
<dbReference type="HAMAP" id="MF_00531">
    <property type="entry name" value="Ribosomal_uS19"/>
    <property type="match status" value="1"/>
</dbReference>
<dbReference type="InterPro" id="IPR002222">
    <property type="entry name" value="Ribosomal_uS19"/>
</dbReference>
<dbReference type="InterPro" id="IPR005732">
    <property type="entry name" value="Ribosomal_uS19_bac-type"/>
</dbReference>
<dbReference type="InterPro" id="IPR020934">
    <property type="entry name" value="Ribosomal_uS19_CS"/>
</dbReference>
<dbReference type="InterPro" id="IPR023575">
    <property type="entry name" value="Ribosomal_uS19_SF"/>
</dbReference>
<dbReference type="NCBIfam" id="TIGR01050">
    <property type="entry name" value="rpsS_bact"/>
    <property type="match status" value="1"/>
</dbReference>
<dbReference type="PANTHER" id="PTHR11880">
    <property type="entry name" value="RIBOSOMAL PROTEIN S19P FAMILY MEMBER"/>
    <property type="match status" value="1"/>
</dbReference>
<dbReference type="PANTHER" id="PTHR11880:SF8">
    <property type="entry name" value="SMALL RIBOSOMAL SUBUNIT PROTEIN US19M"/>
    <property type="match status" value="1"/>
</dbReference>
<dbReference type="Pfam" id="PF00203">
    <property type="entry name" value="Ribosomal_S19"/>
    <property type="match status" value="1"/>
</dbReference>
<dbReference type="PIRSF" id="PIRSF002144">
    <property type="entry name" value="Ribosomal_S19"/>
    <property type="match status" value="1"/>
</dbReference>
<dbReference type="PRINTS" id="PR00975">
    <property type="entry name" value="RIBOSOMALS19"/>
</dbReference>
<dbReference type="SUPFAM" id="SSF54570">
    <property type="entry name" value="Ribosomal protein S19"/>
    <property type="match status" value="1"/>
</dbReference>
<dbReference type="PROSITE" id="PS00323">
    <property type="entry name" value="RIBOSOMAL_S19"/>
    <property type="match status" value="1"/>
</dbReference>